<sequence length="71" mass="7979">MKKEIHPNFKEVKATCTSCGKEHIFGSTVEKISLDVCSNCHAFYTGDRSTVKARGRVERFNKILEKSKTSA</sequence>
<keyword id="KW-1185">Reference proteome</keyword>
<keyword id="KW-0687">Ribonucleoprotein</keyword>
<keyword id="KW-0689">Ribosomal protein</keyword>
<keyword id="KW-0694">RNA-binding</keyword>
<keyword id="KW-0699">rRNA-binding</keyword>
<name>RL31_META1</name>
<reference key="1">
    <citation type="journal article" date="2008" name="Infect. Immun.">
        <title>Genome of Mycoplasma arthritidis.</title>
        <authorList>
            <person name="Dybvig K."/>
            <person name="Zuhua C."/>
            <person name="Lao P."/>
            <person name="Jordan D.S."/>
            <person name="French C.T."/>
            <person name="Tu A.H."/>
            <person name="Loraine A.E."/>
        </authorList>
    </citation>
    <scope>NUCLEOTIDE SEQUENCE [LARGE SCALE GENOMIC DNA]</scope>
    <source>
        <strain>158L3-1</strain>
    </source>
</reference>
<organism>
    <name type="scientific">Metamycoplasma arthritidis (strain 158L3-1)</name>
    <name type="common">Mycoplasma arthritidis</name>
    <dbReference type="NCBI Taxonomy" id="243272"/>
    <lineage>
        <taxon>Bacteria</taxon>
        <taxon>Bacillati</taxon>
        <taxon>Mycoplasmatota</taxon>
        <taxon>Mycoplasmoidales</taxon>
        <taxon>Metamycoplasmataceae</taxon>
        <taxon>Metamycoplasma</taxon>
    </lineage>
</organism>
<comment type="function">
    <text evidence="1">Binds the 23S rRNA.</text>
</comment>
<comment type="subunit">
    <text evidence="1">Part of the 50S ribosomal subunit.</text>
</comment>
<comment type="similarity">
    <text evidence="1">Belongs to the bacterial ribosomal protein bL31 family. Type A subfamily.</text>
</comment>
<protein>
    <recommendedName>
        <fullName evidence="1">Large ribosomal subunit protein bL31</fullName>
    </recommendedName>
    <alternativeName>
        <fullName evidence="2">50S ribosomal protein L31</fullName>
    </alternativeName>
</protein>
<proteinExistence type="inferred from homology"/>
<dbReference type="EMBL" id="CP001047">
    <property type="protein sequence ID" value="ACF07303.1"/>
    <property type="molecule type" value="Genomic_DNA"/>
</dbReference>
<dbReference type="RefSeq" id="WP_012498260.1">
    <property type="nucleotide sequence ID" value="NC_011025.1"/>
</dbReference>
<dbReference type="SMR" id="B3PMQ1"/>
<dbReference type="STRING" id="243272.MARTH_orf449"/>
<dbReference type="KEGG" id="mat:MARTH_orf449"/>
<dbReference type="eggNOG" id="COG0254">
    <property type="taxonomic scope" value="Bacteria"/>
</dbReference>
<dbReference type="HOGENOM" id="CLU_114306_4_3_14"/>
<dbReference type="Proteomes" id="UP000008812">
    <property type="component" value="Chromosome"/>
</dbReference>
<dbReference type="GO" id="GO:1990904">
    <property type="term" value="C:ribonucleoprotein complex"/>
    <property type="evidence" value="ECO:0007669"/>
    <property type="project" value="UniProtKB-KW"/>
</dbReference>
<dbReference type="GO" id="GO:0005840">
    <property type="term" value="C:ribosome"/>
    <property type="evidence" value="ECO:0007669"/>
    <property type="project" value="UniProtKB-KW"/>
</dbReference>
<dbReference type="GO" id="GO:0019843">
    <property type="term" value="F:rRNA binding"/>
    <property type="evidence" value="ECO:0007669"/>
    <property type="project" value="UniProtKB-KW"/>
</dbReference>
<dbReference type="GO" id="GO:0003735">
    <property type="term" value="F:structural constituent of ribosome"/>
    <property type="evidence" value="ECO:0007669"/>
    <property type="project" value="InterPro"/>
</dbReference>
<dbReference type="GO" id="GO:0006412">
    <property type="term" value="P:translation"/>
    <property type="evidence" value="ECO:0007669"/>
    <property type="project" value="UniProtKB-UniRule"/>
</dbReference>
<dbReference type="Gene3D" id="4.10.830.30">
    <property type="entry name" value="Ribosomal protein L31"/>
    <property type="match status" value="1"/>
</dbReference>
<dbReference type="HAMAP" id="MF_00501">
    <property type="entry name" value="Ribosomal_bL31_1"/>
    <property type="match status" value="1"/>
</dbReference>
<dbReference type="InterPro" id="IPR034704">
    <property type="entry name" value="Ribosomal_bL28/bL31-like_sf"/>
</dbReference>
<dbReference type="InterPro" id="IPR002150">
    <property type="entry name" value="Ribosomal_bL31"/>
</dbReference>
<dbReference type="InterPro" id="IPR027491">
    <property type="entry name" value="Ribosomal_bL31_A"/>
</dbReference>
<dbReference type="InterPro" id="IPR042105">
    <property type="entry name" value="Ribosomal_bL31_sf"/>
</dbReference>
<dbReference type="NCBIfam" id="TIGR00105">
    <property type="entry name" value="L31"/>
    <property type="match status" value="1"/>
</dbReference>
<dbReference type="NCBIfam" id="NF000612">
    <property type="entry name" value="PRK00019.1"/>
    <property type="match status" value="1"/>
</dbReference>
<dbReference type="PANTHER" id="PTHR33280">
    <property type="entry name" value="50S RIBOSOMAL PROTEIN L31, CHLOROPLASTIC"/>
    <property type="match status" value="1"/>
</dbReference>
<dbReference type="PANTHER" id="PTHR33280:SF1">
    <property type="entry name" value="LARGE RIBOSOMAL SUBUNIT PROTEIN BL31C"/>
    <property type="match status" value="1"/>
</dbReference>
<dbReference type="Pfam" id="PF01197">
    <property type="entry name" value="Ribosomal_L31"/>
    <property type="match status" value="1"/>
</dbReference>
<dbReference type="PRINTS" id="PR01249">
    <property type="entry name" value="RIBOSOMALL31"/>
</dbReference>
<dbReference type="SUPFAM" id="SSF143800">
    <property type="entry name" value="L28p-like"/>
    <property type="match status" value="1"/>
</dbReference>
<gene>
    <name evidence="1" type="primary">rpmE</name>
    <name type="ordered locus">MARTH_orf449</name>
</gene>
<accession>B3PMQ1</accession>
<evidence type="ECO:0000255" key="1">
    <source>
        <dbReference type="HAMAP-Rule" id="MF_00501"/>
    </source>
</evidence>
<evidence type="ECO:0000305" key="2"/>
<feature type="chain" id="PRO_1000126661" description="Large ribosomal subunit protein bL31">
    <location>
        <begin position="1"/>
        <end position="71"/>
    </location>
</feature>